<sequence length="378" mass="43505">MLAKSSINAPFAKSVLAWYDKFGRKHLPWQQNKTLYGVWLSEVMLQQTQVATVIPYFERFIKTFPNITALANASQDEVLHLWTGLGYYARARNLHKAAQKVRDEFNGNFPTNFEQVWALSGVGRSTAGAILSSVLNQPYPILDGNVKRVLARYFAVEGWSGEKKVENRLWALTEQVTPTTRVADFNQAMMDIGAMVCMRTKPKCDLCPLNIDCLAYKNTNWEKFPAKKPKKAMPEKTTYFLILSKNGKVCLEQRENSGLWGGLFCFPQFEDKSSLLHFLAQEKVTHYQEWPSFRHTFSHFHLDIHPIYAEMESTLCVEQANLDWRKVMESTKEYQSNLSSAVKYWYDPQNPEPIGLAQPVKNLLIQFVRNHYGKNSIL</sequence>
<protein>
    <recommendedName>
        <fullName>Adenine DNA glycosylase</fullName>
        <ecNumber evidence="2">3.2.2.31</ecNumber>
    </recommendedName>
</protein>
<accession>P44320</accession>
<organism>
    <name type="scientific">Haemophilus influenzae (strain ATCC 51907 / DSM 11121 / KW20 / Rd)</name>
    <dbReference type="NCBI Taxonomy" id="71421"/>
    <lineage>
        <taxon>Bacteria</taxon>
        <taxon>Pseudomonadati</taxon>
        <taxon>Pseudomonadota</taxon>
        <taxon>Gammaproteobacteria</taxon>
        <taxon>Pasteurellales</taxon>
        <taxon>Pasteurellaceae</taxon>
        <taxon>Haemophilus</taxon>
    </lineage>
</organism>
<keyword id="KW-0004">4Fe-4S</keyword>
<keyword id="KW-0227">DNA damage</keyword>
<keyword id="KW-0234">DNA repair</keyword>
<keyword id="KW-0326">Glycosidase</keyword>
<keyword id="KW-0378">Hydrolase</keyword>
<keyword id="KW-0408">Iron</keyword>
<keyword id="KW-0411">Iron-sulfur</keyword>
<keyword id="KW-0479">Metal-binding</keyword>
<keyword id="KW-1185">Reference proteome</keyword>
<comment type="function">
    <text evidence="2">Adenine glycosylase active on G-A mispairs. MutY also corrects error-prone DNA synthesis past GO lesions which are due to the oxidatively damaged form of guanine: 7,8-dihydro-8-oxoguanine (8-oxo-dGTP).</text>
</comment>
<comment type="catalytic activity">
    <reaction evidence="2">
        <text>Hydrolyzes free adenine bases from 7,8-dihydro-8-oxoguanine:adenine mismatched double-stranded DNA, leaving an apurinic site.</text>
        <dbReference type="EC" id="3.2.2.31"/>
    </reaction>
</comment>
<comment type="cofactor">
    <cofactor evidence="2">
        <name>[4Fe-4S] cluster</name>
        <dbReference type="ChEBI" id="CHEBI:49883"/>
    </cofactor>
    <text evidence="2">Binds 1 [4Fe-4S] cluster. The cluster does not appear to play a role in catalysis, but is probably involved in the proper positioning of the enzyme along the DNA strand.</text>
</comment>
<comment type="subunit">
    <text evidence="2">Monomer.</text>
</comment>
<comment type="similarity">
    <text evidence="4">Belongs to the Nth/MutY family.</text>
</comment>
<name>MUTY_HAEIN</name>
<reference key="1">
    <citation type="journal article" date="1995" name="Science">
        <title>Whole-genome random sequencing and assembly of Haemophilus influenzae Rd.</title>
        <authorList>
            <person name="Fleischmann R.D."/>
            <person name="Adams M.D."/>
            <person name="White O."/>
            <person name="Clayton R.A."/>
            <person name="Kirkness E.F."/>
            <person name="Kerlavage A.R."/>
            <person name="Bult C.J."/>
            <person name="Tomb J.-F."/>
            <person name="Dougherty B.A."/>
            <person name="Merrick J.M."/>
            <person name="McKenney K."/>
            <person name="Sutton G.G."/>
            <person name="FitzHugh W."/>
            <person name="Fields C.A."/>
            <person name="Gocayne J.D."/>
            <person name="Scott J.D."/>
            <person name="Shirley R."/>
            <person name="Liu L.-I."/>
            <person name="Glodek A."/>
            <person name="Kelley J.M."/>
            <person name="Weidman J.F."/>
            <person name="Phillips C.A."/>
            <person name="Spriggs T."/>
            <person name="Hedblom E."/>
            <person name="Cotton M.D."/>
            <person name="Utterback T.R."/>
            <person name="Hanna M.C."/>
            <person name="Nguyen D.T."/>
            <person name="Saudek D.M."/>
            <person name="Brandon R.C."/>
            <person name="Fine L.D."/>
            <person name="Fritchman J.L."/>
            <person name="Fuhrmann J.L."/>
            <person name="Geoghagen N.S.M."/>
            <person name="Gnehm C.L."/>
            <person name="McDonald L.A."/>
            <person name="Small K.V."/>
            <person name="Fraser C.M."/>
            <person name="Smith H.O."/>
            <person name="Venter J.C."/>
        </authorList>
    </citation>
    <scope>NUCLEOTIDE SEQUENCE [LARGE SCALE GENOMIC DNA]</scope>
    <source>
        <strain>ATCC 51907 / DSM 11121 / KW20 / Rd</strain>
    </source>
</reference>
<proteinExistence type="inferred from homology"/>
<feature type="chain" id="PRO_0000102236" description="Adenine DNA glycosylase">
    <location>
        <begin position="1"/>
        <end position="378"/>
    </location>
</feature>
<feature type="active site" description="Proton donor/acceptor" evidence="3">
    <location>
        <position position="42"/>
    </location>
</feature>
<feature type="binding site" evidence="1">
    <location>
        <position position="197"/>
    </location>
    <ligand>
        <name>[4Fe-4S] cluster</name>
        <dbReference type="ChEBI" id="CHEBI:49883"/>
    </ligand>
</feature>
<feature type="binding site" evidence="1">
    <location>
        <position position="204"/>
    </location>
    <ligand>
        <name>[4Fe-4S] cluster</name>
        <dbReference type="ChEBI" id="CHEBI:49883"/>
    </ligand>
</feature>
<feature type="binding site" evidence="1">
    <location>
        <position position="207"/>
    </location>
    <ligand>
        <name>[4Fe-4S] cluster</name>
        <dbReference type="ChEBI" id="CHEBI:49883"/>
    </ligand>
</feature>
<feature type="binding site" evidence="1">
    <location>
        <position position="213"/>
    </location>
    <ligand>
        <name>[4Fe-4S] cluster</name>
        <dbReference type="ChEBI" id="CHEBI:49883"/>
    </ligand>
</feature>
<feature type="site" description="Transition state stabilizer" evidence="3">
    <location>
        <position position="143"/>
    </location>
</feature>
<gene>
    <name type="primary">mutY</name>
    <name type="ordered locus">HI_0759</name>
</gene>
<evidence type="ECO:0000250" key="1"/>
<evidence type="ECO:0000250" key="2">
    <source>
        <dbReference type="UniProtKB" id="P17802"/>
    </source>
</evidence>
<evidence type="ECO:0000250" key="3">
    <source>
        <dbReference type="UniProtKB" id="P83847"/>
    </source>
</evidence>
<evidence type="ECO:0000305" key="4"/>
<dbReference type="EC" id="3.2.2.31" evidence="2"/>
<dbReference type="EMBL" id="L42023">
    <property type="protein sequence ID" value="AAC22418.1"/>
    <property type="molecule type" value="Genomic_DNA"/>
</dbReference>
<dbReference type="PIR" id="C64091">
    <property type="entry name" value="C64091"/>
</dbReference>
<dbReference type="RefSeq" id="NP_438918.1">
    <property type="nucleotide sequence ID" value="NC_000907.1"/>
</dbReference>
<dbReference type="SMR" id="P44320"/>
<dbReference type="STRING" id="71421.HI_0759"/>
<dbReference type="EnsemblBacteria" id="AAC22418">
    <property type="protein sequence ID" value="AAC22418"/>
    <property type="gene ID" value="HI_0759"/>
</dbReference>
<dbReference type="KEGG" id="hin:HI_0759"/>
<dbReference type="PATRIC" id="fig|71421.8.peg.798"/>
<dbReference type="eggNOG" id="COG1194">
    <property type="taxonomic scope" value="Bacteria"/>
</dbReference>
<dbReference type="HOGENOM" id="CLU_012862_0_2_6"/>
<dbReference type="OrthoDB" id="9802365at2"/>
<dbReference type="PhylomeDB" id="P44320"/>
<dbReference type="BioCyc" id="HINF71421:G1GJ1-797-MONOMER"/>
<dbReference type="Proteomes" id="UP000000579">
    <property type="component" value="Chromosome"/>
</dbReference>
<dbReference type="GO" id="GO:0051539">
    <property type="term" value="F:4 iron, 4 sulfur cluster binding"/>
    <property type="evidence" value="ECO:0007669"/>
    <property type="project" value="UniProtKB-KW"/>
</dbReference>
<dbReference type="GO" id="GO:0034039">
    <property type="term" value="F:8-oxo-7,8-dihydroguanine DNA N-glycosylase activity"/>
    <property type="evidence" value="ECO:0000318"/>
    <property type="project" value="GO_Central"/>
</dbReference>
<dbReference type="GO" id="GO:0035485">
    <property type="term" value="F:adenine/guanine mispair binding"/>
    <property type="evidence" value="ECO:0000318"/>
    <property type="project" value="GO_Central"/>
</dbReference>
<dbReference type="GO" id="GO:0046872">
    <property type="term" value="F:metal ion binding"/>
    <property type="evidence" value="ECO:0007669"/>
    <property type="project" value="UniProtKB-KW"/>
</dbReference>
<dbReference type="GO" id="GO:0032357">
    <property type="term" value="F:oxidized purine DNA binding"/>
    <property type="evidence" value="ECO:0000318"/>
    <property type="project" value="GO_Central"/>
</dbReference>
<dbReference type="GO" id="GO:0000701">
    <property type="term" value="F:purine-specific mismatch base pair DNA N-glycosylase activity"/>
    <property type="evidence" value="ECO:0000318"/>
    <property type="project" value="GO_Central"/>
</dbReference>
<dbReference type="GO" id="GO:0006284">
    <property type="term" value="P:base-excision repair"/>
    <property type="evidence" value="ECO:0000318"/>
    <property type="project" value="GO_Central"/>
</dbReference>
<dbReference type="GO" id="GO:0006298">
    <property type="term" value="P:mismatch repair"/>
    <property type="evidence" value="ECO:0000318"/>
    <property type="project" value="GO_Central"/>
</dbReference>
<dbReference type="CDD" id="cd00056">
    <property type="entry name" value="ENDO3c"/>
    <property type="match status" value="1"/>
</dbReference>
<dbReference type="CDD" id="cd03431">
    <property type="entry name" value="NUDIX_DNA_Glycosylase_C-MutY"/>
    <property type="match status" value="1"/>
</dbReference>
<dbReference type="FunFam" id="1.10.1670.10:FF:000002">
    <property type="entry name" value="Adenine DNA glycosylase"/>
    <property type="match status" value="1"/>
</dbReference>
<dbReference type="FunFam" id="1.10.340.30:FF:000002">
    <property type="entry name" value="Adenine DNA glycosylase"/>
    <property type="match status" value="1"/>
</dbReference>
<dbReference type="FunFam" id="3.90.79.10:FF:000028">
    <property type="entry name" value="Adenine DNA glycosylase"/>
    <property type="match status" value="1"/>
</dbReference>
<dbReference type="Gene3D" id="1.10.1670.10">
    <property type="entry name" value="Helix-hairpin-Helix base-excision DNA repair enzymes (C-terminal)"/>
    <property type="match status" value="1"/>
</dbReference>
<dbReference type="Gene3D" id="1.10.340.30">
    <property type="entry name" value="Hypothetical protein, domain 2"/>
    <property type="match status" value="1"/>
</dbReference>
<dbReference type="Gene3D" id="3.90.79.10">
    <property type="entry name" value="Nucleoside Triphosphate Pyrophosphohydrolase"/>
    <property type="match status" value="1"/>
</dbReference>
<dbReference type="InterPro" id="IPR005760">
    <property type="entry name" value="A/G_AdeGlyc_MutY"/>
</dbReference>
<dbReference type="InterPro" id="IPR011257">
    <property type="entry name" value="DNA_glycosylase"/>
</dbReference>
<dbReference type="InterPro" id="IPR004036">
    <property type="entry name" value="Endonuclease-III-like_CS2"/>
</dbReference>
<dbReference type="InterPro" id="IPR003651">
    <property type="entry name" value="Endonuclease3_FeS-loop_motif"/>
</dbReference>
<dbReference type="InterPro" id="IPR004035">
    <property type="entry name" value="Endouclease-III_FeS-bd_BS"/>
</dbReference>
<dbReference type="InterPro" id="IPR003265">
    <property type="entry name" value="HhH-GPD_domain"/>
</dbReference>
<dbReference type="InterPro" id="IPR023170">
    <property type="entry name" value="HhH_base_excis_C"/>
</dbReference>
<dbReference type="InterPro" id="IPR044298">
    <property type="entry name" value="MIG/MutY"/>
</dbReference>
<dbReference type="InterPro" id="IPR029119">
    <property type="entry name" value="MutY_C"/>
</dbReference>
<dbReference type="InterPro" id="IPR015797">
    <property type="entry name" value="NUDIX_hydrolase-like_dom_sf"/>
</dbReference>
<dbReference type="NCBIfam" id="TIGR01084">
    <property type="entry name" value="mutY"/>
    <property type="match status" value="1"/>
</dbReference>
<dbReference type="NCBIfam" id="NF008132">
    <property type="entry name" value="PRK10880.1"/>
    <property type="match status" value="1"/>
</dbReference>
<dbReference type="PANTHER" id="PTHR42944">
    <property type="entry name" value="ADENINE DNA GLYCOSYLASE"/>
    <property type="match status" value="1"/>
</dbReference>
<dbReference type="PANTHER" id="PTHR42944:SF1">
    <property type="entry name" value="ADENINE DNA GLYCOSYLASE"/>
    <property type="match status" value="1"/>
</dbReference>
<dbReference type="Pfam" id="PF00730">
    <property type="entry name" value="HhH-GPD"/>
    <property type="match status" value="1"/>
</dbReference>
<dbReference type="Pfam" id="PF14815">
    <property type="entry name" value="NUDIX_4"/>
    <property type="match status" value="1"/>
</dbReference>
<dbReference type="SMART" id="SM00478">
    <property type="entry name" value="ENDO3c"/>
    <property type="match status" value="1"/>
</dbReference>
<dbReference type="SMART" id="SM00525">
    <property type="entry name" value="FES"/>
    <property type="match status" value="1"/>
</dbReference>
<dbReference type="SUPFAM" id="SSF48150">
    <property type="entry name" value="DNA-glycosylase"/>
    <property type="match status" value="1"/>
</dbReference>
<dbReference type="SUPFAM" id="SSF55811">
    <property type="entry name" value="Nudix"/>
    <property type="match status" value="1"/>
</dbReference>
<dbReference type="PROSITE" id="PS00764">
    <property type="entry name" value="ENDONUCLEASE_III_1"/>
    <property type="match status" value="1"/>
</dbReference>
<dbReference type="PROSITE" id="PS01155">
    <property type="entry name" value="ENDONUCLEASE_III_2"/>
    <property type="match status" value="1"/>
</dbReference>